<name>FLIL_TREPA</name>
<sequence>MAEKDSIGDIADDFEEQLVAPAADRVGFLPGLLRWVAIAVGAVIFIVTVVTATALVLAKQGSSHTAYPVSQEFRESRELLQYYESVGLIRTNTADALPGTVVVSVALGYPLNDKTAQQELSARLVELKDFLRSYFQRKTLSELRPEHEQKVKIEIRNEINDNVLSRSKVKDIRFTQFDVLKP</sequence>
<gene>
    <name type="primary">fliL</name>
    <name type="ordered locus">TP_0722</name>
</gene>
<protein>
    <recommendedName>
        <fullName>Flagellar protein FliL</fullName>
    </recommendedName>
</protein>
<accession>O07888</accession>
<comment type="function">
    <text evidence="1">Controls the rotational direction of flagella during chemotaxis.</text>
</comment>
<comment type="subcellular location">
    <subcellularLocation>
        <location evidence="3">Cell membrane</location>
        <topology evidence="3">Single-pass membrane protein</topology>
    </subcellularLocation>
</comment>
<comment type="similarity">
    <text evidence="3">Belongs to the FliL family.</text>
</comment>
<reference key="1">
    <citation type="journal article" date="1996" name="J. Bacteriol.">
        <title>Organization, transcription, and expression of the 5' region of the fla operon of Treponema phagedenis and Treponema pallidum.</title>
        <authorList>
            <person name="Limberger R.J."/>
            <person name="Slivienski L.L."/>
            <person name="El-Afandi M.C.T."/>
            <person name="Dantuono L.A."/>
        </authorList>
    </citation>
    <scope>NUCLEOTIDE SEQUENCE [GENOMIC DNA]</scope>
</reference>
<reference key="2">
    <citation type="journal article" date="1998" name="Science">
        <title>Complete genome sequence of Treponema pallidum, the syphilis spirochete.</title>
        <authorList>
            <person name="Fraser C.M."/>
            <person name="Norris S.J."/>
            <person name="Weinstock G.M."/>
            <person name="White O."/>
            <person name="Sutton G.G."/>
            <person name="Dodson R.J."/>
            <person name="Gwinn M.L."/>
            <person name="Hickey E.K."/>
            <person name="Clayton R.A."/>
            <person name="Ketchum K.A."/>
            <person name="Sodergren E."/>
            <person name="Hardham J.M."/>
            <person name="McLeod M.P."/>
            <person name="Salzberg S.L."/>
            <person name="Peterson J.D."/>
            <person name="Khalak H.G."/>
            <person name="Richardson D.L."/>
            <person name="Howell J.K."/>
            <person name="Chidambaram M."/>
            <person name="Utterback T.R."/>
            <person name="McDonald L.A."/>
            <person name="Artiach P."/>
            <person name="Bowman C."/>
            <person name="Cotton M.D."/>
            <person name="Fujii C."/>
            <person name="Garland S.A."/>
            <person name="Hatch B."/>
            <person name="Horst K."/>
            <person name="Roberts K.M."/>
            <person name="Sandusky M."/>
            <person name="Weidman J.F."/>
            <person name="Smith H.O."/>
            <person name="Venter J.C."/>
        </authorList>
    </citation>
    <scope>NUCLEOTIDE SEQUENCE [LARGE SCALE GENOMIC DNA]</scope>
    <source>
        <strain>Nichols</strain>
    </source>
</reference>
<keyword id="KW-1003">Cell membrane</keyword>
<keyword id="KW-0145">Chemotaxis</keyword>
<keyword id="KW-0283">Flagellar rotation</keyword>
<keyword id="KW-0472">Membrane</keyword>
<keyword id="KW-1185">Reference proteome</keyword>
<keyword id="KW-0812">Transmembrane</keyword>
<keyword id="KW-1133">Transmembrane helix</keyword>
<dbReference type="EMBL" id="U28219">
    <property type="protein sequence ID" value="AAB61255.1"/>
    <property type="molecule type" value="Genomic_DNA"/>
</dbReference>
<dbReference type="EMBL" id="AE000520">
    <property type="protein sequence ID" value="AAC65688.1"/>
    <property type="molecule type" value="Genomic_DNA"/>
</dbReference>
<dbReference type="PIR" id="F71291">
    <property type="entry name" value="F71291"/>
</dbReference>
<dbReference type="RefSeq" id="WP_010882167.1">
    <property type="nucleotide sequence ID" value="NC_021490.2"/>
</dbReference>
<dbReference type="SMR" id="O07888"/>
<dbReference type="IntAct" id="O07888">
    <property type="interactions" value="4"/>
</dbReference>
<dbReference type="STRING" id="243276.TP_0722"/>
<dbReference type="EnsemblBacteria" id="AAC65688">
    <property type="protein sequence ID" value="AAC65688"/>
    <property type="gene ID" value="TP_0722"/>
</dbReference>
<dbReference type="GeneID" id="93876491"/>
<dbReference type="KEGG" id="tpa:TP_0722"/>
<dbReference type="KEGG" id="tpw:TPANIC_0722"/>
<dbReference type="eggNOG" id="COG1580">
    <property type="taxonomic scope" value="Bacteria"/>
</dbReference>
<dbReference type="HOGENOM" id="CLU_126053_0_0_12"/>
<dbReference type="OrthoDB" id="350725at2"/>
<dbReference type="Proteomes" id="UP000000811">
    <property type="component" value="Chromosome"/>
</dbReference>
<dbReference type="GO" id="GO:0009425">
    <property type="term" value="C:bacterial-type flagellum basal body"/>
    <property type="evidence" value="ECO:0007669"/>
    <property type="project" value="InterPro"/>
</dbReference>
<dbReference type="GO" id="GO:0005886">
    <property type="term" value="C:plasma membrane"/>
    <property type="evidence" value="ECO:0007669"/>
    <property type="project" value="UniProtKB-SubCell"/>
</dbReference>
<dbReference type="GO" id="GO:0071973">
    <property type="term" value="P:bacterial-type flagellum-dependent cell motility"/>
    <property type="evidence" value="ECO:0007669"/>
    <property type="project" value="InterPro"/>
</dbReference>
<dbReference type="GO" id="GO:0006935">
    <property type="term" value="P:chemotaxis"/>
    <property type="evidence" value="ECO:0007669"/>
    <property type="project" value="UniProtKB-KW"/>
</dbReference>
<dbReference type="InterPro" id="IPR005503">
    <property type="entry name" value="FliL"/>
</dbReference>
<dbReference type="NCBIfam" id="NF005175">
    <property type="entry name" value="PRK06654.1"/>
    <property type="match status" value="1"/>
</dbReference>
<dbReference type="Pfam" id="PF03748">
    <property type="entry name" value="FliL"/>
    <property type="match status" value="1"/>
</dbReference>
<feature type="chain" id="PRO_0000180919" description="Flagellar protein FliL">
    <location>
        <begin position="1"/>
        <end position="182"/>
    </location>
</feature>
<feature type="transmembrane region" description="Helical" evidence="2">
    <location>
        <begin position="36"/>
        <end position="56"/>
    </location>
</feature>
<proteinExistence type="inferred from homology"/>
<organism>
    <name type="scientific">Treponema pallidum (strain Nichols)</name>
    <dbReference type="NCBI Taxonomy" id="243276"/>
    <lineage>
        <taxon>Bacteria</taxon>
        <taxon>Pseudomonadati</taxon>
        <taxon>Spirochaetota</taxon>
        <taxon>Spirochaetia</taxon>
        <taxon>Spirochaetales</taxon>
        <taxon>Treponemataceae</taxon>
        <taxon>Treponema</taxon>
    </lineage>
</organism>
<evidence type="ECO:0000250" key="1"/>
<evidence type="ECO:0000255" key="2"/>
<evidence type="ECO:0000305" key="3"/>